<dbReference type="EMBL" id="BT021692">
    <property type="protein sequence ID" value="AAX46539.1"/>
    <property type="molecule type" value="mRNA"/>
</dbReference>
<dbReference type="EMBL" id="BC118192">
    <property type="protein sequence ID" value="AAI18193.1"/>
    <property type="molecule type" value="mRNA"/>
</dbReference>
<dbReference type="RefSeq" id="NP_001017949.1">
    <property type="nucleotide sequence ID" value="NM_001017949.2"/>
</dbReference>
<dbReference type="SMR" id="Q58DA5"/>
<dbReference type="FunCoup" id="Q58DA5">
    <property type="interactions" value="756"/>
</dbReference>
<dbReference type="STRING" id="9913.ENSBTAP00000069033"/>
<dbReference type="GlyCosmos" id="Q58DA5">
    <property type="glycosylation" value="7 sites, No reported glycans"/>
</dbReference>
<dbReference type="GlyGen" id="Q58DA5">
    <property type="glycosylation" value="7 sites"/>
</dbReference>
<dbReference type="PaxDb" id="9913-ENSBTAP00000013234"/>
<dbReference type="GeneID" id="534414"/>
<dbReference type="KEGG" id="bta:534414"/>
<dbReference type="CTD" id="50863"/>
<dbReference type="VEuPathDB" id="HostDB:ENSBTAG00000010032"/>
<dbReference type="eggNOG" id="KOG3510">
    <property type="taxonomic scope" value="Eukaryota"/>
</dbReference>
<dbReference type="HOGENOM" id="CLU_027228_2_2_1"/>
<dbReference type="InParanoid" id="Q58DA5"/>
<dbReference type="OMA" id="VILMCQQ"/>
<dbReference type="OrthoDB" id="6159398at2759"/>
<dbReference type="TreeFam" id="TF325565"/>
<dbReference type="Reactome" id="R-BTA-163125">
    <property type="pathway name" value="Post-translational modification: synthesis of GPI-anchored proteins"/>
</dbReference>
<dbReference type="Proteomes" id="UP000009136">
    <property type="component" value="Chromosome 29"/>
</dbReference>
<dbReference type="Bgee" id="ENSBTAG00000010032">
    <property type="expression patterns" value="Expressed in retina and 68 other cell types or tissues"/>
</dbReference>
<dbReference type="GO" id="GO:0005886">
    <property type="term" value="C:plasma membrane"/>
    <property type="evidence" value="ECO:0007669"/>
    <property type="project" value="UniProtKB-SubCell"/>
</dbReference>
<dbReference type="GO" id="GO:0098552">
    <property type="term" value="C:side of membrane"/>
    <property type="evidence" value="ECO:0007669"/>
    <property type="project" value="UniProtKB-KW"/>
</dbReference>
<dbReference type="GO" id="GO:0007155">
    <property type="term" value="P:cell adhesion"/>
    <property type="evidence" value="ECO:0007669"/>
    <property type="project" value="UniProtKB-KW"/>
</dbReference>
<dbReference type="FunFam" id="2.60.40.10:FF:000013">
    <property type="entry name" value="cell adhesion molecule 1 isoform X1"/>
    <property type="match status" value="1"/>
</dbReference>
<dbReference type="FunFam" id="2.60.40.10:FF:000305">
    <property type="entry name" value="neurotrimin isoform X2"/>
    <property type="match status" value="1"/>
</dbReference>
<dbReference type="FunFam" id="2.60.40.10:FF:000113">
    <property type="entry name" value="Opioid-binding protein/cell adhesion molecule"/>
    <property type="match status" value="1"/>
</dbReference>
<dbReference type="Gene3D" id="2.60.40.10">
    <property type="entry name" value="Immunoglobulins"/>
    <property type="match status" value="3"/>
</dbReference>
<dbReference type="InterPro" id="IPR007110">
    <property type="entry name" value="Ig-like_dom"/>
</dbReference>
<dbReference type="InterPro" id="IPR036179">
    <property type="entry name" value="Ig-like_dom_sf"/>
</dbReference>
<dbReference type="InterPro" id="IPR013783">
    <property type="entry name" value="Ig-like_fold"/>
</dbReference>
<dbReference type="InterPro" id="IPR013098">
    <property type="entry name" value="Ig_I-set"/>
</dbReference>
<dbReference type="InterPro" id="IPR003599">
    <property type="entry name" value="Ig_sub"/>
</dbReference>
<dbReference type="InterPro" id="IPR003598">
    <property type="entry name" value="Ig_sub2"/>
</dbReference>
<dbReference type="InterPro" id="IPR050876">
    <property type="entry name" value="IgLON_domain"/>
</dbReference>
<dbReference type="PANTHER" id="PTHR42757">
    <property type="entry name" value="IGLON FAMILY OF IMMUNOGLOBULIN SUPERFAMILY-RELATED"/>
    <property type="match status" value="1"/>
</dbReference>
<dbReference type="PANTHER" id="PTHR42757:SF9">
    <property type="entry name" value="NEUROTRIMIN"/>
    <property type="match status" value="1"/>
</dbReference>
<dbReference type="Pfam" id="PF07679">
    <property type="entry name" value="I-set"/>
    <property type="match status" value="2"/>
</dbReference>
<dbReference type="Pfam" id="PF13927">
    <property type="entry name" value="Ig_3"/>
    <property type="match status" value="1"/>
</dbReference>
<dbReference type="SMART" id="SM00409">
    <property type="entry name" value="IG"/>
    <property type="match status" value="3"/>
</dbReference>
<dbReference type="SMART" id="SM00408">
    <property type="entry name" value="IGc2"/>
    <property type="match status" value="3"/>
</dbReference>
<dbReference type="SUPFAM" id="SSF48726">
    <property type="entry name" value="Immunoglobulin"/>
    <property type="match status" value="3"/>
</dbReference>
<dbReference type="PROSITE" id="PS50835">
    <property type="entry name" value="IG_LIKE"/>
    <property type="match status" value="3"/>
</dbReference>
<evidence type="ECO:0000250" key="1"/>
<evidence type="ECO:0000255" key="2"/>
<evidence type="ECO:0000255" key="3">
    <source>
        <dbReference type="PROSITE-ProRule" id="PRU00114"/>
    </source>
</evidence>
<evidence type="ECO:0000305" key="4"/>
<gene>
    <name type="primary">NTM</name>
    <name type="synonym">NT</name>
</gene>
<accession>Q58DA5</accession>
<accession>Q17QT6</accession>
<comment type="function">
    <text evidence="1">Neural cell adhesion molecule.</text>
</comment>
<comment type="subcellular location">
    <subcellularLocation>
        <location evidence="1">Cell membrane</location>
        <topology evidence="1">Lipid-anchor</topology>
        <topology evidence="1">GPI-anchor</topology>
    </subcellularLocation>
</comment>
<comment type="similarity">
    <text evidence="4">Belongs to the immunoglobulin superfamily. IgLON family.</text>
</comment>
<organism>
    <name type="scientific">Bos taurus</name>
    <name type="common">Bovine</name>
    <dbReference type="NCBI Taxonomy" id="9913"/>
    <lineage>
        <taxon>Eukaryota</taxon>
        <taxon>Metazoa</taxon>
        <taxon>Chordata</taxon>
        <taxon>Craniata</taxon>
        <taxon>Vertebrata</taxon>
        <taxon>Euteleostomi</taxon>
        <taxon>Mammalia</taxon>
        <taxon>Eutheria</taxon>
        <taxon>Laurasiatheria</taxon>
        <taxon>Artiodactyla</taxon>
        <taxon>Ruminantia</taxon>
        <taxon>Pecora</taxon>
        <taxon>Bovidae</taxon>
        <taxon>Bovinae</taxon>
        <taxon>Bos</taxon>
    </lineage>
</organism>
<proteinExistence type="evidence at transcript level"/>
<keyword id="KW-0130">Cell adhesion</keyword>
<keyword id="KW-1003">Cell membrane</keyword>
<keyword id="KW-1015">Disulfide bond</keyword>
<keyword id="KW-0325">Glycoprotein</keyword>
<keyword id="KW-0336">GPI-anchor</keyword>
<keyword id="KW-0393">Immunoglobulin domain</keyword>
<keyword id="KW-0449">Lipoprotein</keyword>
<keyword id="KW-0472">Membrane</keyword>
<keyword id="KW-1185">Reference proteome</keyword>
<keyword id="KW-0677">Repeat</keyword>
<keyword id="KW-0732">Signal</keyword>
<reference key="1">
    <citation type="journal article" date="2005" name="BMC Genomics">
        <title>Characterization of 954 bovine full-CDS cDNA sequences.</title>
        <authorList>
            <person name="Harhay G.P."/>
            <person name="Sonstegard T.S."/>
            <person name="Keele J.W."/>
            <person name="Heaton M.P."/>
            <person name="Clawson M.L."/>
            <person name="Snelling W.M."/>
            <person name="Wiedmann R.T."/>
            <person name="Van Tassell C.P."/>
            <person name="Smith T.P.L."/>
        </authorList>
    </citation>
    <scope>NUCLEOTIDE SEQUENCE [LARGE SCALE MRNA]</scope>
</reference>
<reference key="2">
    <citation type="submission" date="2006-06" db="EMBL/GenBank/DDBJ databases">
        <authorList>
            <consortium name="NIH - Mammalian Gene Collection (MGC) project"/>
        </authorList>
    </citation>
    <scope>NUCLEOTIDE SEQUENCE [LARGE SCALE MRNA]</scope>
    <source>
        <strain>Hereford</strain>
        <tissue>Thalamus</tissue>
    </source>
</reference>
<sequence length="345" mass="38000">MGVCGSLFLPWKCLVVVSLRLLFLVPTGVPVRSGDATFPKAMDNVTVRQGESATLRCTIDNRVTRVAWLNRSTILYAGNDKWCLDPRVVLLSNTQTQYSIEIQNVDVYDEGPYTCSVQTDNHPKTSRVHLIVQVSPKIVEISSDISINEGNNISLTCIATGRPEPTVTWRHISPKAVGFVSEDEYLEIQGITREQSGYYECSASNDVAAPVVRRVKVTVNYPPYISEAKGTGVPVGQKGTLQCEASAVPSAEFQWYKDDKRLVEGKKGVKVENRPFLSKLIFFNVSEHDYGNYTCVASNKLGHTNASITLFGPGAVSEVSNGTSSRRAGCLWLLPLLVLHLLLKF</sequence>
<feature type="signal peptide" evidence="2">
    <location>
        <begin position="1"/>
        <end position="30"/>
    </location>
</feature>
<feature type="chain" id="PRO_0000239704" description="Neurotrimin">
    <location>
        <begin position="31"/>
        <end position="321"/>
    </location>
</feature>
<feature type="propeptide" id="PRO_0000239705" description="Removed in mature form" evidence="2">
    <location>
        <begin position="322"/>
        <end position="345"/>
    </location>
</feature>
<feature type="domain" description="Ig-like C2-type 1">
    <location>
        <begin position="39"/>
        <end position="126"/>
    </location>
</feature>
<feature type="domain" description="Ig-like C2-type 2">
    <location>
        <begin position="136"/>
        <end position="218"/>
    </location>
</feature>
<feature type="domain" description="Ig-like C2-type 3">
    <location>
        <begin position="222"/>
        <end position="309"/>
    </location>
</feature>
<feature type="lipid moiety-binding region" description="GPI-anchor amidated asparagine" evidence="2">
    <location>
        <position position="321"/>
    </location>
</feature>
<feature type="glycosylation site" description="N-linked (GlcNAc...) asparagine" evidence="2">
    <location>
        <position position="44"/>
    </location>
</feature>
<feature type="glycosylation site" description="N-linked (GlcNAc...) asparagine" evidence="2">
    <location>
        <position position="70"/>
    </location>
</feature>
<feature type="glycosylation site" description="N-linked (GlcNAc...) asparagine" evidence="2">
    <location>
        <position position="152"/>
    </location>
</feature>
<feature type="glycosylation site" description="N-linked (GlcNAc...) asparagine" evidence="2">
    <location>
        <position position="284"/>
    </location>
</feature>
<feature type="glycosylation site" description="N-linked (GlcNAc...) asparagine" evidence="2">
    <location>
        <position position="292"/>
    </location>
</feature>
<feature type="glycosylation site" description="N-linked (GlcNAc...) asparagine" evidence="2">
    <location>
        <position position="305"/>
    </location>
</feature>
<feature type="glycosylation site" description="N-linked (GlcNAc...) asparagine" evidence="2">
    <location>
        <position position="321"/>
    </location>
</feature>
<feature type="disulfide bond" evidence="3">
    <location>
        <begin position="57"/>
        <end position="115"/>
    </location>
</feature>
<feature type="disulfide bond" evidence="3">
    <location>
        <begin position="157"/>
        <end position="201"/>
    </location>
</feature>
<feature type="disulfide bond" evidence="3">
    <location>
        <begin position="243"/>
        <end position="295"/>
    </location>
</feature>
<name>NTRI_BOVIN</name>
<protein>
    <recommendedName>
        <fullName>Neurotrimin</fullName>
    </recommendedName>
</protein>